<protein>
    <recommendedName>
        <fullName evidence="1">Betaine aldehyde dehydrogenase</fullName>
        <shortName evidence="1">BADH</shortName>
        <ecNumber evidence="1">1.2.1.8</ecNumber>
    </recommendedName>
</protein>
<keyword id="KW-0479">Metal-binding</keyword>
<keyword id="KW-0520">NAD</keyword>
<keyword id="KW-0521">NADP</keyword>
<keyword id="KW-0558">Oxidation</keyword>
<keyword id="KW-0560">Oxidoreductase</keyword>
<keyword id="KW-0630">Potassium</keyword>
<proteinExistence type="inferred from homology"/>
<feature type="chain" id="PRO_1000133948" description="Betaine aldehyde dehydrogenase">
    <location>
        <begin position="1"/>
        <end position="490"/>
    </location>
</feature>
<feature type="active site" description="Charge relay system" evidence="1">
    <location>
        <position position="162"/>
    </location>
</feature>
<feature type="active site" description="Proton acceptor" evidence="1">
    <location>
        <position position="252"/>
    </location>
</feature>
<feature type="active site" description="Nucleophile" evidence="1">
    <location>
        <position position="286"/>
    </location>
</feature>
<feature type="active site" description="Charge relay system" evidence="1">
    <location>
        <position position="464"/>
    </location>
</feature>
<feature type="binding site" evidence="1">
    <location>
        <position position="26"/>
    </location>
    <ligand>
        <name>K(+)</name>
        <dbReference type="ChEBI" id="CHEBI:29103"/>
        <label>1</label>
    </ligand>
</feature>
<feature type="binding site" evidence="1">
    <location>
        <position position="27"/>
    </location>
    <ligand>
        <name>K(+)</name>
        <dbReference type="ChEBI" id="CHEBI:29103"/>
        <label>1</label>
    </ligand>
</feature>
<feature type="binding site" evidence="1">
    <location>
        <position position="93"/>
    </location>
    <ligand>
        <name>K(+)</name>
        <dbReference type="ChEBI" id="CHEBI:29103"/>
        <label>1</label>
    </ligand>
</feature>
<feature type="binding site" evidence="1">
    <location>
        <begin position="150"/>
        <end position="152"/>
    </location>
    <ligand>
        <name>NAD(+)</name>
        <dbReference type="ChEBI" id="CHEBI:57540"/>
    </ligand>
</feature>
<feature type="binding site" evidence="1">
    <location>
        <begin position="176"/>
        <end position="179"/>
    </location>
    <ligand>
        <name>NAD(+)</name>
        <dbReference type="ChEBI" id="CHEBI:57540"/>
    </ligand>
</feature>
<feature type="binding site" evidence="1">
    <location>
        <position position="180"/>
    </location>
    <ligand>
        <name>K(+)</name>
        <dbReference type="ChEBI" id="CHEBI:29103"/>
        <label>1</label>
    </ligand>
</feature>
<feature type="binding site" evidence="1">
    <location>
        <begin position="230"/>
        <end position="233"/>
    </location>
    <ligand>
        <name>NAD(+)</name>
        <dbReference type="ChEBI" id="CHEBI:57540"/>
    </ligand>
</feature>
<feature type="binding site" evidence="1">
    <location>
        <position position="246"/>
    </location>
    <ligand>
        <name>K(+)</name>
        <dbReference type="ChEBI" id="CHEBI:29103"/>
        <label>2</label>
    </ligand>
</feature>
<feature type="binding site" evidence="1">
    <location>
        <position position="254"/>
    </location>
    <ligand>
        <name>NAD(+)</name>
        <dbReference type="ChEBI" id="CHEBI:57540"/>
    </ligand>
</feature>
<feature type="binding site" description="covalent" evidence="1">
    <location>
        <position position="286"/>
    </location>
    <ligand>
        <name>NAD(+)</name>
        <dbReference type="ChEBI" id="CHEBI:57540"/>
    </ligand>
</feature>
<feature type="binding site" evidence="1">
    <location>
        <position position="387"/>
    </location>
    <ligand>
        <name>NAD(+)</name>
        <dbReference type="ChEBI" id="CHEBI:57540"/>
    </ligand>
</feature>
<feature type="binding site" evidence="1">
    <location>
        <position position="457"/>
    </location>
    <ligand>
        <name>K(+)</name>
        <dbReference type="ChEBI" id="CHEBI:29103"/>
        <label>2</label>
    </ligand>
</feature>
<feature type="binding site" evidence="1">
    <location>
        <position position="460"/>
    </location>
    <ligand>
        <name>K(+)</name>
        <dbReference type="ChEBI" id="CHEBI:29103"/>
        <label>2</label>
    </ligand>
</feature>
<feature type="site" description="Seems to be a necessary countercharge to the potassium cations" evidence="1">
    <location>
        <position position="248"/>
    </location>
</feature>
<feature type="modified residue" description="Cysteine sulfenic acid (-SOH)" evidence="1">
    <location>
        <position position="286"/>
    </location>
</feature>
<accession>B7NK50</accession>
<sequence length="490" mass="52890">MSRMAEQQLYIHGGCTSATSGRTFETINPANGNVLATVQAAGREDVDRAVKSAQQGQKIWAAMTAMERSRILRRAVDILRERNDELAKLETLDTGKAYSETSTVDIVTGADVLEYYAGLIPALEGSQIPLRETSFVYTRHEPLGVVAGIGAWNYPIQIALWKSAPALAAGNAMIFKPSEVTPLTALKLAEIYSEAGLPDGVFNVLPGVGAETGQYLTEHPGIAKVSFTGGVASGKKVMANSAASSLKEVTMELGGKSPLIVFDDADLDLAADIAMMANFFSSGQVCTNGTRVFIPTKCKAAFEQKILARVERIRAGDVFDPQTNFGPLVSFPHRDNVLRYIAKGKEEGARVLCGGDVLKGDSFDNGAWVAPTVFTDCSDDMTIVREEIFGPVMSILTYESEDEVIRRANDTDYGLAAGIVTADLNRAHRVIHQLEAGICWINTWGESPAEMPVGGYKHSGIGRENGVMTLQSYTQVKSIQVEMAKFQSIF</sequence>
<comment type="function">
    <text evidence="1">Involved in the biosynthesis of the osmoprotectant glycine betaine. Catalyzes the irreversible oxidation of betaine aldehyde to the corresponding acid.</text>
</comment>
<comment type="catalytic activity">
    <reaction evidence="1">
        <text>betaine aldehyde + NAD(+) + H2O = glycine betaine + NADH + 2 H(+)</text>
        <dbReference type="Rhea" id="RHEA:15305"/>
        <dbReference type="ChEBI" id="CHEBI:15377"/>
        <dbReference type="ChEBI" id="CHEBI:15378"/>
        <dbReference type="ChEBI" id="CHEBI:15710"/>
        <dbReference type="ChEBI" id="CHEBI:17750"/>
        <dbReference type="ChEBI" id="CHEBI:57540"/>
        <dbReference type="ChEBI" id="CHEBI:57945"/>
        <dbReference type="EC" id="1.2.1.8"/>
    </reaction>
    <physiologicalReaction direction="left-to-right" evidence="1">
        <dbReference type="Rhea" id="RHEA:15306"/>
    </physiologicalReaction>
</comment>
<comment type="cofactor">
    <cofactor evidence="1">
        <name>K(+)</name>
        <dbReference type="ChEBI" id="CHEBI:29103"/>
    </cofactor>
    <text evidence="1">Binds 2 potassium ions per subunit.</text>
</comment>
<comment type="pathway">
    <text evidence="1">Amine and polyamine biosynthesis; betaine biosynthesis via choline pathway; betaine from betaine aldehyde: step 1/1.</text>
</comment>
<comment type="subunit">
    <text evidence="1">Dimer of dimers.</text>
</comment>
<comment type="similarity">
    <text evidence="1">Belongs to the aldehyde dehydrogenase family.</text>
</comment>
<evidence type="ECO:0000255" key="1">
    <source>
        <dbReference type="HAMAP-Rule" id="MF_00804"/>
    </source>
</evidence>
<gene>
    <name evidence="1" type="primary">betB</name>
    <name type="ordered locus">ECIAI39_0374</name>
</gene>
<organism>
    <name type="scientific">Escherichia coli O7:K1 (strain IAI39 / ExPEC)</name>
    <dbReference type="NCBI Taxonomy" id="585057"/>
    <lineage>
        <taxon>Bacteria</taxon>
        <taxon>Pseudomonadati</taxon>
        <taxon>Pseudomonadota</taxon>
        <taxon>Gammaproteobacteria</taxon>
        <taxon>Enterobacterales</taxon>
        <taxon>Enterobacteriaceae</taxon>
        <taxon>Escherichia</taxon>
    </lineage>
</organism>
<name>BETB_ECO7I</name>
<dbReference type="EC" id="1.2.1.8" evidence="1"/>
<dbReference type="EMBL" id="CU928164">
    <property type="protein sequence ID" value="CAR16514.1"/>
    <property type="molecule type" value="Genomic_DNA"/>
</dbReference>
<dbReference type="RefSeq" id="WP_000089052.1">
    <property type="nucleotide sequence ID" value="NC_011750.1"/>
</dbReference>
<dbReference type="RefSeq" id="YP_002406413.1">
    <property type="nucleotide sequence ID" value="NC_011750.1"/>
</dbReference>
<dbReference type="SMR" id="B7NK50"/>
<dbReference type="STRING" id="585057.ECIAI39_0374"/>
<dbReference type="KEGG" id="ect:ECIAI39_0374"/>
<dbReference type="PATRIC" id="fig|585057.6.peg.400"/>
<dbReference type="HOGENOM" id="CLU_005391_0_2_6"/>
<dbReference type="UniPathway" id="UPA00529">
    <property type="reaction ID" value="UER00386"/>
</dbReference>
<dbReference type="Proteomes" id="UP000000749">
    <property type="component" value="Chromosome"/>
</dbReference>
<dbReference type="GO" id="GO:0008802">
    <property type="term" value="F:betaine-aldehyde dehydrogenase (NAD+) activity"/>
    <property type="evidence" value="ECO:0007669"/>
    <property type="project" value="UniProtKB-UniRule"/>
</dbReference>
<dbReference type="GO" id="GO:0046872">
    <property type="term" value="F:metal ion binding"/>
    <property type="evidence" value="ECO:0007669"/>
    <property type="project" value="UniProtKB-KW"/>
</dbReference>
<dbReference type="GO" id="GO:0019285">
    <property type="term" value="P:glycine betaine biosynthetic process from choline"/>
    <property type="evidence" value="ECO:0007669"/>
    <property type="project" value="UniProtKB-UniRule"/>
</dbReference>
<dbReference type="CDD" id="cd07090">
    <property type="entry name" value="ALDH_F9_TMBADH"/>
    <property type="match status" value="1"/>
</dbReference>
<dbReference type="FunFam" id="3.40.309.10:FF:000014">
    <property type="entry name" value="NAD/NADP-dependent betaine aldehyde dehydrogenase"/>
    <property type="match status" value="1"/>
</dbReference>
<dbReference type="FunFam" id="3.40.605.10:FF:000007">
    <property type="entry name" value="NAD/NADP-dependent betaine aldehyde dehydrogenase"/>
    <property type="match status" value="1"/>
</dbReference>
<dbReference type="Gene3D" id="3.40.605.10">
    <property type="entry name" value="Aldehyde Dehydrogenase, Chain A, domain 1"/>
    <property type="match status" value="1"/>
</dbReference>
<dbReference type="Gene3D" id="3.40.309.10">
    <property type="entry name" value="Aldehyde Dehydrogenase, Chain A, domain 2"/>
    <property type="match status" value="1"/>
</dbReference>
<dbReference type="HAMAP" id="MF_00804">
    <property type="entry name" value="BADH"/>
    <property type="match status" value="1"/>
</dbReference>
<dbReference type="InterPro" id="IPR016161">
    <property type="entry name" value="Ald_DH/histidinol_DH"/>
</dbReference>
<dbReference type="InterPro" id="IPR016163">
    <property type="entry name" value="Ald_DH_C"/>
</dbReference>
<dbReference type="InterPro" id="IPR016160">
    <property type="entry name" value="Ald_DH_CS_CYS"/>
</dbReference>
<dbReference type="InterPro" id="IPR029510">
    <property type="entry name" value="Ald_DH_CS_GLU"/>
</dbReference>
<dbReference type="InterPro" id="IPR016162">
    <property type="entry name" value="Ald_DH_N"/>
</dbReference>
<dbReference type="InterPro" id="IPR015590">
    <property type="entry name" value="Aldehyde_DH_dom"/>
</dbReference>
<dbReference type="InterPro" id="IPR011264">
    <property type="entry name" value="BADH"/>
</dbReference>
<dbReference type="NCBIfam" id="TIGR01804">
    <property type="entry name" value="BADH"/>
    <property type="match status" value="1"/>
</dbReference>
<dbReference type="NCBIfam" id="NF009725">
    <property type="entry name" value="PRK13252.1"/>
    <property type="match status" value="1"/>
</dbReference>
<dbReference type="PANTHER" id="PTHR11699">
    <property type="entry name" value="ALDEHYDE DEHYDROGENASE-RELATED"/>
    <property type="match status" value="1"/>
</dbReference>
<dbReference type="Pfam" id="PF00171">
    <property type="entry name" value="Aldedh"/>
    <property type="match status" value="1"/>
</dbReference>
<dbReference type="SUPFAM" id="SSF53720">
    <property type="entry name" value="ALDH-like"/>
    <property type="match status" value="1"/>
</dbReference>
<dbReference type="PROSITE" id="PS00070">
    <property type="entry name" value="ALDEHYDE_DEHYDR_CYS"/>
    <property type="match status" value="1"/>
</dbReference>
<dbReference type="PROSITE" id="PS00687">
    <property type="entry name" value="ALDEHYDE_DEHYDR_GLU"/>
    <property type="match status" value="1"/>
</dbReference>
<reference key="1">
    <citation type="journal article" date="2009" name="PLoS Genet.">
        <title>Organised genome dynamics in the Escherichia coli species results in highly diverse adaptive paths.</title>
        <authorList>
            <person name="Touchon M."/>
            <person name="Hoede C."/>
            <person name="Tenaillon O."/>
            <person name="Barbe V."/>
            <person name="Baeriswyl S."/>
            <person name="Bidet P."/>
            <person name="Bingen E."/>
            <person name="Bonacorsi S."/>
            <person name="Bouchier C."/>
            <person name="Bouvet O."/>
            <person name="Calteau A."/>
            <person name="Chiapello H."/>
            <person name="Clermont O."/>
            <person name="Cruveiller S."/>
            <person name="Danchin A."/>
            <person name="Diard M."/>
            <person name="Dossat C."/>
            <person name="Karoui M.E."/>
            <person name="Frapy E."/>
            <person name="Garry L."/>
            <person name="Ghigo J.M."/>
            <person name="Gilles A.M."/>
            <person name="Johnson J."/>
            <person name="Le Bouguenec C."/>
            <person name="Lescat M."/>
            <person name="Mangenot S."/>
            <person name="Martinez-Jehanne V."/>
            <person name="Matic I."/>
            <person name="Nassif X."/>
            <person name="Oztas S."/>
            <person name="Petit M.A."/>
            <person name="Pichon C."/>
            <person name="Rouy Z."/>
            <person name="Ruf C.S."/>
            <person name="Schneider D."/>
            <person name="Tourret J."/>
            <person name="Vacherie B."/>
            <person name="Vallenet D."/>
            <person name="Medigue C."/>
            <person name="Rocha E.P.C."/>
            <person name="Denamur E."/>
        </authorList>
    </citation>
    <scope>NUCLEOTIDE SEQUENCE [LARGE SCALE GENOMIC DNA]</scope>
    <source>
        <strain>IAI39 / ExPEC</strain>
    </source>
</reference>